<gene>
    <name evidence="5" type="primary">PEP3</name>
    <name type="ORF">CPC735_058790</name>
</gene>
<proteinExistence type="inferred from homology"/>
<evidence type="ECO:0000250" key="1">
    <source>
        <dbReference type="UniProtKB" id="Q12567"/>
    </source>
</evidence>
<evidence type="ECO:0000255" key="2"/>
<evidence type="ECO:0000255" key="3">
    <source>
        <dbReference type="PROSITE-ProRule" id="PRU00498"/>
    </source>
</evidence>
<evidence type="ECO:0000255" key="4">
    <source>
        <dbReference type="PROSITE-ProRule" id="PRU01103"/>
    </source>
</evidence>
<evidence type="ECO:0000303" key="5">
    <source>
    </source>
</evidence>
<evidence type="ECO:0000305" key="6"/>
<sequence>MQNRPRVFDSAMNLSPNMHFLSLMPGLLLLSLQVHTSPTPLKKTIRSVRIERIRQPNYVPDGPGALKKAYAKFGIIPSGISFDSFEDFTPFSSDNVRNTVSKAMQANETGIVTNTPTNNDVEYLSPVTIGGQKFVMNLDTGSSDTWVFNTQLSEDAKRGHSIFDPAKSKAFSDLEDATFNITYGDASFAFGRVGIDTVDIGGATVQKQAVGLPTDVSGSFILDQASDGLIGLGFDELNTVEPQQQKSFFTNLAANLDEPVLAAQLKKGAPGSYEFGSIDETKFKGDLVTIPVNNSRGFWEVKSTMFKVGKDEQLHRITKGVGSAIADTGTTLMLVNEEIVNSYYDQVDNARSVYAAGGFIFPCNATLPDLYVSLGDTHLARIPGDLMNFSKVGLSTETGEELCFGGVQSNSGSGLQVFGDVLFKAIFVVFDLRGPSLHVAGHA</sequence>
<accession>C5PEI9</accession>
<accession>Q3HYC4</accession>
<protein>
    <recommendedName>
        <fullName evidence="6">Aspartic protease PEP3</fullName>
        <ecNumber>3.4.23.-</ecNumber>
    </recommendedName>
</protein>
<feature type="signal peptide" evidence="2">
    <location>
        <begin position="1"/>
        <end position="36"/>
    </location>
</feature>
<feature type="propeptide" id="PRO_0000407046" description="Activation peptide" evidence="1">
    <location>
        <begin position="37"/>
        <end position="107"/>
    </location>
</feature>
<feature type="chain" id="PRO_0000407047" description="Aspartic protease PEP3">
    <location>
        <begin position="108"/>
        <end position="443"/>
    </location>
</feature>
<feature type="domain" description="Peptidase A1" evidence="4">
    <location>
        <begin position="123"/>
        <end position="440"/>
    </location>
</feature>
<feature type="active site" evidence="4">
    <location>
        <position position="139"/>
    </location>
</feature>
<feature type="active site" evidence="4">
    <location>
        <position position="327"/>
    </location>
</feature>
<feature type="glycosylation site" description="N-linked (GlcNAc...) asparagine" evidence="3">
    <location>
        <position position="180"/>
    </location>
</feature>
<feature type="glycosylation site" description="N-linked (GlcNAc...) asparagine" evidence="3">
    <location>
        <position position="293"/>
    </location>
</feature>
<feature type="glycosylation site" description="N-linked (GlcNAc...) asparagine" evidence="3">
    <location>
        <position position="364"/>
    </location>
</feature>
<feature type="glycosylation site" description="N-linked (GlcNAc...) asparagine" evidence="3">
    <location>
        <position position="388"/>
    </location>
</feature>
<feature type="disulfide bond" evidence="4">
    <location>
        <begin position="363"/>
        <end position="403"/>
    </location>
</feature>
<comment type="function">
    <text evidence="1">Secreted aspartic endopeptidase that allows assimilation of proteinaceous substrates. The scissile peptide bond is attacked by a nucleophilic water molecule activated by two aspartic residues in the active site. Shows a broad primary substrate specificity. Favors hydrophobic residues at the P1 and P1' positions.</text>
</comment>
<comment type="subunit">
    <text evidence="1">Monomer.</text>
</comment>
<comment type="subcellular location">
    <subcellularLocation>
        <location evidence="1">Secreted</location>
    </subcellularLocation>
</comment>
<comment type="similarity">
    <text evidence="4">Belongs to the peptidase A1 family.</text>
</comment>
<reference key="1">
    <citation type="journal article" date="2006" name="Infect. Immun.">
        <title>A recombinant aspartyl protease of Coccidioides posadasii induces protection against pulmonary coccidioidomycosis in mice.</title>
        <authorList>
            <person name="Tarcha E.J."/>
            <person name="Basrur V."/>
            <person name="Hung C.Y."/>
            <person name="Gardner M.J."/>
            <person name="Cole G.T."/>
        </authorList>
    </citation>
    <scope>NUCLEOTIDE SEQUENCE [GENOMIC DNA]</scope>
    <source>
        <strain>C735</strain>
    </source>
</reference>
<reference key="2">
    <citation type="journal article" date="2009" name="Genome Res.">
        <title>Comparative genomic analyses of the human fungal pathogens Coccidioides and their relatives.</title>
        <authorList>
            <person name="Sharpton T.J."/>
            <person name="Stajich J.E."/>
            <person name="Rounsley S.D."/>
            <person name="Gardner M.J."/>
            <person name="Wortman J.R."/>
            <person name="Jordar V.S."/>
            <person name="Maiti R."/>
            <person name="Kodira C.D."/>
            <person name="Neafsey D.E."/>
            <person name="Zeng Q."/>
            <person name="Hung C.-Y."/>
            <person name="McMahan C."/>
            <person name="Muszewska A."/>
            <person name="Grynberg M."/>
            <person name="Mandel M.A."/>
            <person name="Kellner E.M."/>
            <person name="Barker B.M."/>
            <person name="Galgiani J.N."/>
            <person name="Orbach M.J."/>
            <person name="Kirkland T.N."/>
            <person name="Cole G.T."/>
            <person name="Henn M.R."/>
            <person name="Birren B.W."/>
            <person name="Taylor J.W."/>
        </authorList>
    </citation>
    <scope>NUCLEOTIDE SEQUENCE [LARGE SCALE GENOMIC DNA]</scope>
    <source>
        <strain>C735</strain>
    </source>
</reference>
<organism>
    <name type="scientific">Coccidioides posadasii (strain C735)</name>
    <name type="common">Valley fever fungus</name>
    <dbReference type="NCBI Taxonomy" id="222929"/>
    <lineage>
        <taxon>Eukaryota</taxon>
        <taxon>Fungi</taxon>
        <taxon>Dikarya</taxon>
        <taxon>Ascomycota</taxon>
        <taxon>Pezizomycotina</taxon>
        <taxon>Eurotiomycetes</taxon>
        <taxon>Eurotiomycetidae</taxon>
        <taxon>Onygenales</taxon>
        <taxon>Onygenaceae</taxon>
        <taxon>Coccidioides</taxon>
    </lineage>
</organism>
<dbReference type="EC" id="3.4.23.-"/>
<dbReference type="EMBL" id="DQ176860">
    <property type="protein sequence ID" value="ABA54908.1"/>
    <property type="molecule type" value="Genomic_DNA"/>
</dbReference>
<dbReference type="EMBL" id="ACFW01000049">
    <property type="protein sequence ID" value="EER24509.1"/>
    <property type="molecule type" value="Genomic_DNA"/>
</dbReference>
<dbReference type="RefSeq" id="XP_003066654.1">
    <property type="nucleotide sequence ID" value="XM_003066608.1"/>
</dbReference>
<dbReference type="SMR" id="C5PEI9"/>
<dbReference type="MEROPS" id="A01.079"/>
<dbReference type="GlyCosmos" id="C5PEI9">
    <property type="glycosylation" value="4 sites, No reported glycans"/>
</dbReference>
<dbReference type="GeneID" id="9692124"/>
<dbReference type="KEGG" id="cpw:9692124"/>
<dbReference type="VEuPathDB" id="FungiDB:CPC735_058790"/>
<dbReference type="HOGENOM" id="CLU_013253_0_1_1"/>
<dbReference type="OrthoDB" id="2747330at2759"/>
<dbReference type="Proteomes" id="UP000009084">
    <property type="component" value="Unassembled WGS sequence"/>
</dbReference>
<dbReference type="GO" id="GO:0005576">
    <property type="term" value="C:extracellular region"/>
    <property type="evidence" value="ECO:0007669"/>
    <property type="project" value="UniProtKB-SubCell"/>
</dbReference>
<dbReference type="GO" id="GO:0004190">
    <property type="term" value="F:aspartic-type endopeptidase activity"/>
    <property type="evidence" value="ECO:0007669"/>
    <property type="project" value="UniProtKB-KW"/>
</dbReference>
<dbReference type="GO" id="GO:0006508">
    <property type="term" value="P:proteolysis"/>
    <property type="evidence" value="ECO:0007669"/>
    <property type="project" value="UniProtKB-KW"/>
</dbReference>
<dbReference type="CDD" id="cd06097">
    <property type="entry name" value="Aspergillopepsin_like"/>
    <property type="match status" value="1"/>
</dbReference>
<dbReference type="FunFam" id="2.40.70.10:FF:000026">
    <property type="entry name" value="Endothiapepsin"/>
    <property type="match status" value="1"/>
</dbReference>
<dbReference type="Gene3D" id="2.40.70.10">
    <property type="entry name" value="Acid Proteases"/>
    <property type="match status" value="2"/>
</dbReference>
<dbReference type="InterPro" id="IPR001461">
    <property type="entry name" value="Aspartic_peptidase_A1"/>
</dbReference>
<dbReference type="InterPro" id="IPR001969">
    <property type="entry name" value="Aspartic_peptidase_AS"/>
</dbReference>
<dbReference type="InterPro" id="IPR034163">
    <property type="entry name" value="Aspergillopepsin-like_cat_dom"/>
</dbReference>
<dbReference type="InterPro" id="IPR033121">
    <property type="entry name" value="PEPTIDASE_A1"/>
</dbReference>
<dbReference type="InterPro" id="IPR021109">
    <property type="entry name" value="Peptidase_aspartic_dom_sf"/>
</dbReference>
<dbReference type="PANTHER" id="PTHR47966:SF23">
    <property type="entry name" value="ASPARTIC ENDOPEPTIDASE, PUTATIVE (AFU_ORTHOLOGUE AFUA_2G15950)-RELATED"/>
    <property type="match status" value="1"/>
</dbReference>
<dbReference type="PANTHER" id="PTHR47966">
    <property type="entry name" value="BETA-SITE APP-CLEAVING ENZYME, ISOFORM A-RELATED"/>
    <property type="match status" value="1"/>
</dbReference>
<dbReference type="Pfam" id="PF00026">
    <property type="entry name" value="Asp"/>
    <property type="match status" value="1"/>
</dbReference>
<dbReference type="PRINTS" id="PR00792">
    <property type="entry name" value="PEPSIN"/>
</dbReference>
<dbReference type="SUPFAM" id="SSF50630">
    <property type="entry name" value="Acid proteases"/>
    <property type="match status" value="1"/>
</dbReference>
<dbReference type="PROSITE" id="PS00141">
    <property type="entry name" value="ASP_PROTEASE"/>
    <property type="match status" value="2"/>
</dbReference>
<dbReference type="PROSITE" id="PS51767">
    <property type="entry name" value="PEPTIDASE_A1"/>
    <property type="match status" value="1"/>
</dbReference>
<keyword id="KW-0064">Aspartyl protease</keyword>
<keyword id="KW-1015">Disulfide bond</keyword>
<keyword id="KW-0325">Glycoprotein</keyword>
<keyword id="KW-0378">Hydrolase</keyword>
<keyword id="KW-0645">Protease</keyword>
<keyword id="KW-0964">Secreted</keyword>
<keyword id="KW-0732">Signal</keyword>
<keyword id="KW-0843">Virulence</keyword>
<keyword id="KW-0865">Zymogen</keyword>
<name>PEPA_COCP7</name>